<accession>P67655</accession>
<accession>Q99TC8</accession>
<dbReference type="EMBL" id="BA000017">
    <property type="protein sequence ID" value="BAB57898.1"/>
    <property type="status" value="ALT_INIT"/>
    <property type="molecule type" value="Genomic_DNA"/>
</dbReference>
<dbReference type="RefSeq" id="WP_000219066.1">
    <property type="nucleotide sequence ID" value="NC_002758.2"/>
</dbReference>
<dbReference type="SMR" id="P67655"/>
<dbReference type="KEGG" id="sav:SAV1736"/>
<dbReference type="HOGENOM" id="CLU_037628_6_0_9"/>
<dbReference type="Proteomes" id="UP000002481">
    <property type="component" value="Chromosome"/>
</dbReference>
<dbReference type="GO" id="GO:0003700">
    <property type="term" value="F:DNA-binding transcription factor activity"/>
    <property type="evidence" value="ECO:0007669"/>
    <property type="project" value="TreeGrafter"/>
</dbReference>
<dbReference type="GO" id="GO:0000976">
    <property type="term" value="F:transcription cis-regulatory region binding"/>
    <property type="evidence" value="ECO:0007669"/>
    <property type="project" value="TreeGrafter"/>
</dbReference>
<dbReference type="CDD" id="cd01392">
    <property type="entry name" value="HTH_LacI"/>
    <property type="match status" value="1"/>
</dbReference>
<dbReference type="FunFam" id="1.10.260.40:FF:000002">
    <property type="entry name" value="HTH-type transcriptional repressor PurR"/>
    <property type="match status" value="1"/>
</dbReference>
<dbReference type="Gene3D" id="3.40.50.2300">
    <property type="match status" value="2"/>
</dbReference>
<dbReference type="Gene3D" id="1.10.260.40">
    <property type="entry name" value="lambda repressor-like DNA-binding domains"/>
    <property type="match status" value="1"/>
</dbReference>
<dbReference type="InterPro" id="IPR006377">
    <property type="entry name" value="CcpA"/>
</dbReference>
<dbReference type="InterPro" id="IPR000843">
    <property type="entry name" value="HTH_LacI"/>
</dbReference>
<dbReference type="InterPro" id="IPR046335">
    <property type="entry name" value="LacI/GalR-like_sensor"/>
</dbReference>
<dbReference type="InterPro" id="IPR010982">
    <property type="entry name" value="Lambda_DNA-bd_dom_sf"/>
</dbReference>
<dbReference type="InterPro" id="IPR028082">
    <property type="entry name" value="Peripla_BP_I"/>
</dbReference>
<dbReference type="NCBIfam" id="TIGR01481">
    <property type="entry name" value="ccpA"/>
    <property type="match status" value="1"/>
</dbReference>
<dbReference type="PANTHER" id="PTHR30146:SF150">
    <property type="entry name" value="ARABINOSE METABOLISM TRANSCRIPTIONAL REPRESSOR"/>
    <property type="match status" value="1"/>
</dbReference>
<dbReference type="PANTHER" id="PTHR30146">
    <property type="entry name" value="LACI-RELATED TRANSCRIPTIONAL REPRESSOR"/>
    <property type="match status" value="1"/>
</dbReference>
<dbReference type="Pfam" id="PF00356">
    <property type="entry name" value="LacI"/>
    <property type="match status" value="1"/>
</dbReference>
<dbReference type="Pfam" id="PF13377">
    <property type="entry name" value="Peripla_BP_3"/>
    <property type="match status" value="1"/>
</dbReference>
<dbReference type="PRINTS" id="PR00036">
    <property type="entry name" value="HTHLACI"/>
</dbReference>
<dbReference type="SMART" id="SM00354">
    <property type="entry name" value="HTH_LACI"/>
    <property type="match status" value="1"/>
</dbReference>
<dbReference type="SUPFAM" id="SSF47413">
    <property type="entry name" value="lambda repressor-like DNA-binding domains"/>
    <property type="match status" value="1"/>
</dbReference>
<dbReference type="SUPFAM" id="SSF53822">
    <property type="entry name" value="Periplasmic binding protein-like I"/>
    <property type="match status" value="1"/>
</dbReference>
<dbReference type="PROSITE" id="PS00356">
    <property type="entry name" value="HTH_LACI_1"/>
    <property type="match status" value="1"/>
</dbReference>
<dbReference type="PROSITE" id="PS50932">
    <property type="entry name" value="HTH_LACI_2"/>
    <property type="match status" value="1"/>
</dbReference>
<proteinExistence type="inferred from homology"/>
<sequence length="329" mass="36060">MTVTIYDVAREARVSMATVSRVVNGNQNVKAETKNKVNEVIKRLNYRPNAVARGLASKKTTTVGVIIPDISNIYYSQLARGLEDIATMYKYHSIISNSDNDPEKEKEIFNNLLSKQVDGIIFLGGTITEEMKELINQSSVPVVVSGTNGKDAHIASVNIDFTEAAKEITGELIEKGAKSFALVGGEHSKKAQEDVLEGLTEVLNKNGLQLGDTLNCSGAESYKEGVKAFAKMKGNLPDAILCISDEEAIGIMHSAMDAGIKVPEELQIISFNNTRLVEMVRPQLSSVIQPLYDIGAVGMRLLTKYMNDEKIEEPNVVLPHRIEYRGTTK</sequence>
<evidence type="ECO:0000250" key="1"/>
<evidence type="ECO:0000255" key="2">
    <source>
        <dbReference type="PROSITE-ProRule" id="PRU00111"/>
    </source>
</evidence>
<evidence type="ECO:0000305" key="3"/>
<comment type="function">
    <text evidence="1">Global transcriptional regulator of carbon catabolite repression (CCR) and carbon catabolite activation (CCA), which ensures optimal energy usage under diverse conditions.</text>
</comment>
<comment type="sequence caution" evidence="3">
    <conflict type="erroneous initiation">
        <sequence resource="EMBL-CDS" id="BAB57898"/>
    </conflict>
    <text>Truncated N-terminus.</text>
</comment>
<keyword id="KW-0010">Activator</keyword>
<keyword id="KW-0238">DNA-binding</keyword>
<keyword id="KW-0678">Repressor</keyword>
<keyword id="KW-0804">Transcription</keyword>
<keyword id="KW-0805">Transcription regulation</keyword>
<feature type="chain" id="PRO_0000107927" description="Catabolite control protein A">
    <location>
        <begin position="1"/>
        <end position="329"/>
    </location>
</feature>
<feature type="domain" description="HTH lacI-type" evidence="2">
    <location>
        <begin position="1"/>
        <end position="57"/>
    </location>
</feature>
<feature type="DNA-binding region" description="H-T-H motif" evidence="2">
    <location>
        <begin position="5"/>
        <end position="24"/>
    </location>
</feature>
<reference key="1">
    <citation type="journal article" date="2001" name="Lancet">
        <title>Whole genome sequencing of meticillin-resistant Staphylococcus aureus.</title>
        <authorList>
            <person name="Kuroda M."/>
            <person name="Ohta T."/>
            <person name="Uchiyama I."/>
            <person name="Baba T."/>
            <person name="Yuzawa H."/>
            <person name="Kobayashi I."/>
            <person name="Cui L."/>
            <person name="Oguchi A."/>
            <person name="Aoki K."/>
            <person name="Nagai Y."/>
            <person name="Lian J.-Q."/>
            <person name="Ito T."/>
            <person name="Kanamori M."/>
            <person name="Matsumaru H."/>
            <person name="Maruyama A."/>
            <person name="Murakami H."/>
            <person name="Hosoyama A."/>
            <person name="Mizutani-Ui Y."/>
            <person name="Takahashi N.K."/>
            <person name="Sawano T."/>
            <person name="Inoue R."/>
            <person name="Kaito C."/>
            <person name="Sekimizu K."/>
            <person name="Hirakawa H."/>
            <person name="Kuhara S."/>
            <person name="Goto S."/>
            <person name="Yabuzaki J."/>
            <person name="Kanehisa M."/>
            <person name="Yamashita A."/>
            <person name="Oshima K."/>
            <person name="Furuya K."/>
            <person name="Yoshino C."/>
            <person name="Shiba T."/>
            <person name="Hattori M."/>
            <person name="Ogasawara N."/>
            <person name="Hayashi H."/>
            <person name="Hiramatsu K."/>
        </authorList>
    </citation>
    <scope>NUCLEOTIDE SEQUENCE [LARGE SCALE GENOMIC DNA]</scope>
    <source>
        <strain>Mu50 / ATCC 700699</strain>
    </source>
</reference>
<gene>
    <name type="primary">ccpA</name>
    <name type="ordered locus">SAV1736</name>
</gene>
<organism>
    <name type="scientific">Staphylococcus aureus (strain Mu50 / ATCC 700699)</name>
    <dbReference type="NCBI Taxonomy" id="158878"/>
    <lineage>
        <taxon>Bacteria</taxon>
        <taxon>Bacillati</taxon>
        <taxon>Bacillota</taxon>
        <taxon>Bacilli</taxon>
        <taxon>Bacillales</taxon>
        <taxon>Staphylococcaceae</taxon>
        <taxon>Staphylococcus</taxon>
    </lineage>
</organism>
<protein>
    <recommendedName>
        <fullName>Catabolite control protein A</fullName>
    </recommendedName>
</protein>
<name>CCPA_STAAM</name>